<gene>
    <name evidence="22" type="primary">unc-64</name>
    <name evidence="22" type="ORF">F56A8.7</name>
</gene>
<dbReference type="EMBL" id="AB008842">
    <property type="protein sequence ID" value="BAA23584.1"/>
    <property type="molecule type" value="mRNA"/>
</dbReference>
<dbReference type="EMBL" id="AB008843">
    <property type="protein sequence ID" value="BAA23585.1"/>
    <property type="molecule type" value="mRNA"/>
</dbReference>
<dbReference type="EMBL" id="AB008844">
    <property type="protein sequence ID" value="BAA23586.1"/>
    <property type="molecule type" value="mRNA"/>
</dbReference>
<dbReference type="EMBL" id="AF047885">
    <property type="protein sequence ID" value="AAD10538.1"/>
    <property type="molecule type" value="mRNA"/>
</dbReference>
<dbReference type="EMBL" id="AF047886">
    <property type="protein sequence ID" value="AAD10539.1"/>
    <property type="molecule type" value="mRNA"/>
</dbReference>
<dbReference type="EMBL" id="AF047887">
    <property type="protein sequence ID" value="AAD10540.1"/>
    <property type="molecule type" value="mRNA"/>
</dbReference>
<dbReference type="EMBL" id="BX284603">
    <property type="protein sequence ID" value="CAB05747.1"/>
    <property type="molecule type" value="Genomic_DNA"/>
</dbReference>
<dbReference type="EMBL" id="BX284603">
    <property type="protein sequence ID" value="CAC42303.1"/>
    <property type="molecule type" value="Genomic_DNA"/>
</dbReference>
<dbReference type="PIR" id="T37265">
    <property type="entry name" value="T37265"/>
</dbReference>
<dbReference type="PIR" id="T37266">
    <property type="entry name" value="T37266"/>
</dbReference>
<dbReference type="PIR" id="T42641">
    <property type="entry name" value="T42641"/>
</dbReference>
<dbReference type="RefSeq" id="NP_001022614.1">
    <molecule id="O16000-2"/>
    <property type="nucleotide sequence ID" value="NM_001027443.6"/>
</dbReference>
<dbReference type="RefSeq" id="NP_001022615.1">
    <property type="nucleotide sequence ID" value="NM_001027444.3"/>
</dbReference>
<dbReference type="RefSeq" id="NP_001366988.1">
    <molecule id="O16000-1"/>
    <property type="nucleotide sequence ID" value="NM_001379980.1"/>
</dbReference>
<dbReference type="SMR" id="O16000"/>
<dbReference type="BioGRID" id="41914">
    <property type="interactions" value="8"/>
</dbReference>
<dbReference type="DIP" id="DIP-25166N"/>
<dbReference type="DIP" id="DIP-29202N"/>
<dbReference type="FunCoup" id="O16000">
    <property type="interactions" value="961"/>
</dbReference>
<dbReference type="IntAct" id="O16000">
    <property type="interactions" value="5"/>
</dbReference>
<dbReference type="STRING" id="6239.F56A8.7a.2"/>
<dbReference type="TCDB" id="1.F.1.1.3">
    <property type="family name" value="the synaptosomal vesicle fusion pore (svf-pore) family"/>
</dbReference>
<dbReference type="iPTMnet" id="O16000"/>
<dbReference type="PaxDb" id="6239-F56A8.7a"/>
<dbReference type="PeptideAtlas" id="O16000"/>
<dbReference type="EnsemblMetazoa" id="F56A8.7a.1">
    <molecule id="O16000-2"/>
    <property type="protein sequence ID" value="F56A8.7a.1"/>
    <property type="gene ID" value="WBGene00006798"/>
</dbReference>
<dbReference type="EnsemblMetazoa" id="F56A8.7a.2">
    <molecule id="O16000-2"/>
    <property type="protein sequence ID" value="F56A8.7a.2"/>
    <property type="gene ID" value="WBGene00006798"/>
</dbReference>
<dbReference type="EnsemblMetazoa" id="F56A8.7b.1">
    <molecule id="O16000-1"/>
    <property type="protein sequence ID" value="F56A8.7b.1"/>
    <property type="gene ID" value="WBGene00006798"/>
</dbReference>
<dbReference type="GeneID" id="176743"/>
<dbReference type="KEGG" id="cel:CELE_F56A8.7"/>
<dbReference type="UCSC" id="F56A8.7b">
    <molecule id="O16000-1"/>
    <property type="organism name" value="c. elegans"/>
</dbReference>
<dbReference type="AGR" id="WB:WBGene00006798"/>
<dbReference type="CTD" id="176743"/>
<dbReference type="WormBase" id="F56A8.7a">
    <molecule id="O16000-2"/>
    <property type="protein sequence ID" value="CE16127"/>
    <property type="gene ID" value="WBGene00006798"/>
    <property type="gene designation" value="unc-64"/>
</dbReference>
<dbReference type="WormBase" id="F56A8.7b">
    <molecule id="O16000-1"/>
    <property type="protein sequence ID" value="CE28035"/>
    <property type="gene ID" value="WBGene00006798"/>
    <property type="gene designation" value="unc-64"/>
</dbReference>
<dbReference type="eggNOG" id="KOG0810">
    <property type="taxonomic scope" value="Eukaryota"/>
</dbReference>
<dbReference type="GeneTree" id="ENSGT01030000234627"/>
<dbReference type="InParanoid" id="O16000"/>
<dbReference type="OMA" id="HPRNAPQ"/>
<dbReference type="OrthoDB" id="10255013at2759"/>
<dbReference type="PhylomeDB" id="O16000"/>
<dbReference type="Reactome" id="R-CEL-114516">
    <property type="pathway name" value="Disinhibition of SNARE formation"/>
</dbReference>
<dbReference type="Reactome" id="R-CEL-181429">
    <property type="pathway name" value="Serotonin Neurotransmitter Release Cycle"/>
</dbReference>
<dbReference type="Reactome" id="R-CEL-181430">
    <property type="pathway name" value="Norepinephrine Neurotransmitter Release Cycle"/>
</dbReference>
<dbReference type="Reactome" id="R-CEL-199992">
    <property type="pathway name" value="trans-Golgi Network Vesicle Budding"/>
</dbReference>
<dbReference type="Reactome" id="R-CEL-210500">
    <property type="pathway name" value="Glutamate Neurotransmitter Release Cycle"/>
</dbReference>
<dbReference type="Reactome" id="R-CEL-212676">
    <property type="pathway name" value="Dopamine Neurotransmitter Release Cycle"/>
</dbReference>
<dbReference type="Reactome" id="R-CEL-264642">
    <property type="pathway name" value="Acetylcholine Neurotransmitter Release Cycle"/>
</dbReference>
<dbReference type="Reactome" id="R-CEL-449836">
    <property type="pathway name" value="Other interleukin signaling"/>
</dbReference>
<dbReference type="Reactome" id="R-CEL-888590">
    <property type="pathway name" value="GABA synthesis, release, reuptake and degradation"/>
</dbReference>
<dbReference type="Reactome" id="R-CEL-9609523">
    <property type="pathway name" value="Insertion of tail-anchored proteins into the endoplasmic reticulum membrane"/>
</dbReference>
<dbReference type="PRO" id="PR:O16000"/>
<dbReference type="Proteomes" id="UP000001940">
    <property type="component" value="Chromosome III"/>
</dbReference>
<dbReference type="Bgee" id="WBGene00006798">
    <property type="expression patterns" value="Expressed in pharyngeal muscle cell (C elegans) and 4 other cell types or tissues"/>
</dbReference>
<dbReference type="GO" id="GO:0030424">
    <property type="term" value="C:axon"/>
    <property type="evidence" value="ECO:0000314"/>
    <property type="project" value="WormBase"/>
</dbReference>
<dbReference type="GO" id="GO:0016323">
    <property type="term" value="C:basolateral plasma membrane"/>
    <property type="evidence" value="ECO:0000314"/>
    <property type="project" value="WormBase"/>
</dbReference>
<dbReference type="GO" id="GO:0030425">
    <property type="term" value="C:dendrite"/>
    <property type="evidence" value="ECO:0000314"/>
    <property type="project" value="WormBase"/>
</dbReference>
<dbReference type="GO" id="GO:0012505">
    <property type="term" value="C:endomembrane system"/>
    <property type="evidence" value="ECO:0000318"/>
    <property type="project" value="GO_Central"/>
</dbReference>
<dbReference type="GO" id="GO:0016020">
    <property type="term" value="C:membrane"/>
    <property type="evidence" value="ECO:0000305"/>
    <property type="project" value="UniProtKB"/>
</dbReference>
<dbReference type="GO" id="GO:0043025">
    <property type="term" value="C:neuronal cell body"/>
    <property type="evidence" value="ECO:0000314"/>
    <property type="project" value="WormBase"/>
</dbReference>
<dbReference type="GO" id="GO:0043204">
    <property type="term" value="C:perikaryon"/>
    <property type="evidence" value="ECO:0007669"/>
    <property type="project" value="UniProtKB-SubCell"/>
</dbReference>
<dbReference type="GO" id="GO:0005886">
    <property type="term" value="C:plasma membrane"/>
    <property type="evidence" value="ECO:0000318"/>
    <property type="project" value="GO_Central"/>
</dbReference>
<dbReference type="GO" id="GO:0098793">
    <property type="term" value="C:presynapse"/>
    <property type="evidence" value="ECO:0007669"/>
    <property type="project" value="GOC"/>
</dbReference>
<dbReference type="GO" id="GO:0031201">
    <property type="term" value="C:SNARE complex"/>
    <property type="evidence" value="ECO:0000318"/>
    <property type="project" value="GO_Central"/>
</dbReference>
<dbReference type="GO" id="GO:0051087">
    <property type="term" value="F:protein-folding chaperone binding"/>
    <property type="evidence" value="ECO:0000353"/>
    <property type="project" value="WormBase"/>
</dbReference>
<dbReference type="GO" id="GO:0005484">
    <property type="term" value="F:SNAP receptor activity"/>
    <property type="evidence" value="ECO:0000318"/>
    <property type="project" value="GO_Central"/>
</dbReference>
<dbReference type="GO" id="GO:0000149">
    <property type="term" value="F:SNARE binding"/>
    <property type="evidence" value="ECO:0000318"/>
    <property type="project" value="GO_Central"/>
</dbReference>
<dbReference type="GO" id="GO:0042302">
    <property type="term" value="F:structural constituent of cuticle"/>
    <property type="evidence" value="ECO:0007669"/>
    <property type="project" value="UniProtKB-KW"/>
</dbReference>
<dbReference type="GO" id="GO:0019722">
    <property type="term" value="P:calcium-mediated signaling"/>
    <property type="evidence" value="ECO:0000303"/>
    <property type="project" value="UniProtKB"/>
</dbReference>
<dbReference type="GO" id="GO:0030154">
    <property type="term" value="P:cell differentiation"/>
    <property type="evidence" value="ECO:0007669"/>
    <property type="project" value="UniProtKB-KW"/>
</dbReference>
<dbReference type="GO" id="GO:0007268">
    <property type="term" value="P:chemical synaptic transmission"/>
    <property type="evidence" value="ECO:0000315"/>
    <property type="project" value="UniProtKB"/>
</dbReference>
<dbReference type="GO" id="GO:0006887">
    <property type="term" value="P:exocytosis"/>
    <property type="evidence" value="ECO:0000318"/>
    <property type="project" value="GO_Central"/>
</dbReference>
<dbReference type="GO" id="GO:0008286">
    <property type="term" value="P:insulin receptor signaling pathway"/>
    <property type="evidence" value="ECO:0000315"/>
    <property type="project" value="UniProtKB"/>
</dbReference>
<dbReference type="GO" id="GO:0006886">
    <property type="term" value="P:intracellular protein transport"/>
    <property type="evidence" value="ECO:0000318"/>
    <property type="project" value="GO_Central"/>
</dbReference>
<dbReference type="GO" id="GO:0040011">
    <property type="term" value="P:locomotion"/>
    <property type="evidence" value="ECO:0000315"/>
    <property type="project" value="UniProtKB"/>
</dbReference>
<dbReference type="GO" id="GO:0007269">
    <property type="term" value="P:neurotransmitter secretion"/>
    <property type="evidence" value="ECO:0000315"/>
    <property type="project" value="UniProtKB"/>
</dbReference>
<dbReference type="GO" id="GO:1905488">
    <property type="term" value="P:positive regulation of anterior/posterior axon guidance"/>
    <property type="evidence" value="ECO:0000316"/>
    <property type="project" value="UniProtKB"/>
</dbReference>
<dbReference type="GO" id="GO:0040014">
    <property type="term" value="P:regulation of multicellular organism growth"/>
    <property type="evidence" value="ECO:0000315"/>
    <property type="project" value="UniProtKB"/>
</dbReference>
<dbReference type="GO" id="GO:0007271">
    <property type="term" value="P:synaptic transmission, cholinergic"/>
    <property type="evidence" value="ECO:0000315"/>
    <property type="project" value="WormBase"/>
</dbReference>
<dbReference type="GO" id="GO:0007419">
    <property type="term" value="P:ventral cord development"/>
    <property type="evidence" value="ECO:0000316"/>
    <property type="project" value="UniProtKB"/>
</dbReference>
<dbReference type="GO" id="GO:0048278">
    <property type="term" value="P:vesicle docking"/>
    <property type="evidence" value="ECO:0000318"/>
    <property type="project" value="GO_Central"/>
</dbReference>
<dbReference type="GO" id="GO:0006906">
    <property type="term" value="P:vesicle fusion"/>
    <property type="evidence" value="ECO:0000318"/>
    <property type="project" value="GO_Central"/>
</dbReference>
<dbReference type="CDD" id="cd15880">
    <property type="entry name" value="SNARE_syntaxin1"/>
    <property type="match status" value="1"/>
</dbReference>
<dbReference type="CDD" id="cd00179">
    <property type="entry name" value="SynN"/>
    <property type="match status" value="1"/>
</dbReference>
<dbReference type="FunFam" id="1.20.5.110:FF:000005">
    <property type="entry name" value="Syntaxin 1B"/>
    <property type="match status" value="1"/>
</dbReference>
<dbReference type="FunFam" id="1.20.58.70:FF:000001">
    <property type="entry name" value="Syntaxin 3"/>
    <property type="match status" value="1"/>
</dbReference>
<dbReference type="Gene3D" id="1.20.5.110">
    <property type="match status" value="1"/>
</dbReference>
<dbReference type="Gene3D" id="1.20.58.70">
    <property type="match status" value="1"/>
</dbReference>
<dbReference type="InterPro" id="IPR010989">
    <property type="entry name" value="SNARE"/>
</dbReference>
<dbReference type="InterPro" id="IPR045242">
    <property type="entry name" value="Syntaxin"/>
</dbReference>
<dbReference type="InterPro" id="IPR006012">
    <property type="entry name" value="Syntaxin/epimorphin_CS"/>
</dbReference>
<dbReference type="InterPro" id="IPR006011">
    <property type="entry name" value="Syntaxin_N"/>
</dbReference>
<dbReference type="InterPro" id="IPR000727">
    <property type="entry name" value="T_SNARE_dom"/>
</dbReference>
<dbReference type="PANTHER" id="PTHR19957">
    <property type="entry name" value="SYNTAXIN"/>
    <property type="match status" value="1"/>
</dbReference>
<dbReference type="PANTHER" id="PTHR19957:SF424">
    <property type="entry name" value="SYNTAXIN-1A"/>
    <property type="match status" value="1"/>
</dbReference>
<dbReference type="Pfam" id="PF05739">
    <property type="entry name" value="SNARE"/>
    <property type="match status" value="1"/>
</dbReference>
<dbReference type="Pfam" id="PF00804">
    <property type="entry name" value="Syntaxin"/>
    <property type="match status" value="1"/>
</dbReference>
<dbReference type="SMART" id="SM00503">
    <property type="entry name" value="SynN"/>
    <property type="match status" value="1"/>
</dbReference>
<dbReference type="SMART" id="SM00397">
    <property type="entry name" value="t_SNARE"/>
    <property type="match status" value="1"/>
</dbReference>
<dbReference type="SUPFAM" id="SSF47661">
    <property type="entry name" value="t-snare proteins"/>
    <property type="match status" value="1"/>
</dbReference>
<dbReference type="PROSITE" id="PS00914">
    <property type="entry name" value="SYNTAXIN"/>
    <property type="match status" value="1"/>
</dbReference>
<dbReference type="PROSITE" id="PS50192">
    <property type="entry name" value="T_SNARE"/>
    <property type="match status" value="1"/>
</dbReference>
<organism>
    <name type="scientific">Caenorhabditis elegans</name>
    <dbReference type="NCBI Taxonomy" id="6239"/>
    <lineage>
        <taxon>Eukaryota</taxon>
        <taxon>Metazoa</taxon>
        <taxon>Ecdysozoa</taxon>
        <taxon>Nematoda</taxon>
        <taxon>Chromadorea</taxon>
        <taxon>Rhabditida</taxon>
        <taxon>Rhabditina</taxon>
        <taxon>Rhabditomorpha</taxon>
        <taxon>Rhabditoidea</taxon>
        <taxon>Rhabditidae</taxon>
        <taxon>Peloderinae</taxon>
        <taxon>Caenorhabditis</taxon>
    </lineage>
</organism>
<accession>O16000</accession>
<accession>O18657</accession>
<accession>O61526</accession>
<accession>Q9TZZ0</accession>
<name>STX1A_CAEEL</name>
<protein>
    <recommendedName>
        <fullName>Syntaxin-1A homolog</fullName>
    </recommendedName>
    <alternativeName>
        <fullName>Uncoordinated protein 64</fullName>
    </alternativeName>
</protein>
<reference evidence="17 19" key="1">
    <citation type="journal article" date="1998" name="J. Biol. Chem.">
        <title>Functional properties of the unc-64 gene encoding a Caenorhabditis elegans syntaxin.</title>
        <authorList>
            <person name="Ogawa H."/>
            <person name="Harada S."/>
            <person name="Sassa T."/>
            <person name="Yamamoto H."/>
            <person name="Hosono R."/>
        </authorList>
    </citation>
    <scope>NUCLEOTIDE SEQUENCE [MRNA] (ISOFORMS A AND B)</scope>
    <scope>FUNCTION</scope>
    <scope>INTERACTION WITH UNC-18</scope>
    <scope>TISSUE SPECIFICITY</scope>
</reference>
<reference evidence="17 18" key="2">
    <citation type="journal article" date="1998" name="Mol. Biol. Cell">
        <title>The Caenorhabditis elegans unc-64 locus encodes a syntaxin that interacts genetically with synaptobrevin.</title>
        <authorList>
            <person name="Saifee O."/>
            <person name="Wei L."/>
            <person name="Nonet M.L."/>
        </authorList>
    </citation>
    <scope>NUCLEOTIDE SEQUENCE [MRNA] (ISOFORM B)</scope>
    <scope>NUCLEOTIDE SEQUENCE [MRNA] OF 265-291 (ISOFORM A)</scope>
    <scope>TISSUE SPECIFICITY</scope>
    <source>
        <strain evidence="18">Bristol N2</strain>
    </source>
</reference>
<reference evidence="20" key="3">
    <citation type="journal article" date="1998" name="Science">
        <title>Genome sequence of the nematode C. elegans: a platform for investigating biology.</title>
        <authorList>
            <consortium name="The C. elegans sequencing consortium"/>
        </authorList>
    </citation>
    <scope>NUCLEOTIDE SEQUENCE [LARGE SCALE GENOMIC DNA]</scope>
    <source>
        <strain evidence="20">Bristol N2</strain>
    </source>
</reference>
<reference evidence="17" key="4">
    <citation type="journal article" date="1991" name="Neurosci. Lett.">
        <title>Additional genes which result in an elevation of acetylcholine levels by mutations in Caenorhabditis elegans.</title>
        <authorList>
            <person name="Hosono R."/>
            <person name="Kamiya Y."/>
        </authorList>
    </citation>
    <scope>FUNCTION</scope>
    <scope>DISRUPTION PHENOTYPE</scope>
</reference>
<reference key="5">
    <citation type="journal article" date="1996" name="Neurochem. Int.">
        <title>Expression, purification and characterization of recombinant C. Elegans UNC-18.</title>
        <authorList>
            <person name="Ogawa H."/>
            <person name="Hayashi N."/>
            <person name="Hori I."/>
            <person name="Kobayashi T."/>
            <person name="Hosono R."/>
        </authorList>
    </citation>
    <scope>INTERACTION WITH UNC-18</scope>
</reference>
<reference key="6">
    <citation type="journal article" date="1999" name="J. Neurosci.">
        <title>Regulation of the UNC-18-Caenorhabditis elegans syntaxin complex by UNC-13.</title>
        <authorList>
            <person name="Sassa T."/>
            <person name="Harada S."/>
            <person name="Ogawa H."/>
            <person name="Rand J.B."/>
            <person name="Maruyama I.N."/>
            <person name="Hosono R."/>
        </authorList>
    </citation>
    <scope>INTERACTION WITH UNC-18</scope>
</reference>
<reference evidence="17" key="7">
    <citation type="journal article" date="1999" name="Proc. Natl. Acad. Sci. U.S.A.">
        <title>Neurosecretory control of aging in Caenorhabditis elegans.</title>
        <authorList>
            <person name="Ailion M."/>
            <person name="Inoue T."/>
            <person name="Weaver C.I."/>
            <person name="Holdcraft R.W."/>
            <person name="Thomas J.H."/>
        </authorList>
    </citation>
    <scope>FUNCTION</scope>
    <scope>MUTAGENESIS OF ALA-248</scope>
    <scope>DISRUPTION PHENOTYPE</scope>
</reference>
<reference key="8">
    <citation type="journal article" date="2003" name="Nat. Neurosci.">
        <title>Defects in synaptic vesicle docking in unc-18 mutants.</title>
        <authorList>
            <person name="Weimer R.M."/>
            <person name="Richmond J.E."/>
            <person name="Davis W.S."/>
            <person name="Hadwiger G."/>
            <person name="Nonet M.L."/>
            <person name="Jorgensen E.M."/>
        </authorList>
    </citation>
    <scope>SUBCELLULAR LOCATION</scope>
</reference>
<reference key="9">
    <citation type="journal article" date="2007" name="Nat. Neurosci.">
        <title>Epidermal growth factor signaling induces behavioral quiescence in Caenorhabditis elegans.</title>
        <authorList>
            <person name="Van Buskirk C."/>
            <person name="Sternberg P.W."/>
        </authorList>
    </citation>
    <scope>FUNCTION</scope>
    <scope>MUTAGENESIS OF ALA-248</scope>
</reference>
<reference key="10">
    <citation type="journal article" date="2008" name="Mol. Biol. Cell">
        <title>UNC-18 promotes both the anterograde trafficking and synaptic function of syntaxin.</title>
        <authorList>
            <person name="McEwen J.M."/>
            <person name="Kaplan J.M."/>
        </authorList>
    </citation>
    <scope>FUNCTION</scope>
    <scope>SUBUNIT</scope>
    <scope>INTERACTION WITH UNC-18</scope>
    <scope>SUBCELLULAR LOCATION</scope>
    <scope>MUTAGENESIS OF LEU-9</scope>
</reference>
<reference key="11">
    <citation type="journal article" date="2009" name="Biochem. J.">
        <title>Binding of UNC-18 to the N-terminus of syntaxin is essential for neurotransmission in Caenorhabditis elegans.</title>
        <authorList>
            <person name="Johnson J.R."/>
            <person name="Ferdek P."/>
            <person name="Lian L.Y."/>
            <person name="Barclay J.W."/>
            <person name="Burgoyne R.D."/>
            <person name="Morgan A."/>
        </authorList>
    </citation>
    <scope>INTERACTION WITH UNC-18</scope>
    <scope>MUTAGENESIS OF 1-MET--ASP-21; LEU-9 AND ILE-234</scope>
</reference>
<reference key="12">
    <citation type="journal article" date="2010" name="Front. Synaptic Neurosci.">
        <title>Differential Regulation of Synaptic Vesicle Tethering and Docking by UNC-18 and TOM-1.</title>
        <authorList>
            <person name="Gracheva E.O."/>
            <person name="Maryon E.B."/>
            <person name="Berthelot-Grosjean M."/>
            <person name="Richmond J.E."/>
        </authorList>
    </citation>
    <scope>FUNCTION</scope>
    <scope>SUBUNIT</scope>
    <scope>INTERACTION WITH UNC-18</scope>
</reference>
<proteinExistence type="evidence at protein level"/>
<comment type="function">
    <text evidence="6 8 9 11 12 14">Plays a critical role in several secretory processes, including cuticle secretion and neurotransmitter release, and probably assists in neuronal membrane maturation or the final stages of neuronal differentiation (PubMed:1945043, PubMed:9442061). Plays a role in synaptic vesicle docking and tethering through its association with unc-18 (PubMed:21423527). Through binding to unc-18 mediates the release of the neurotransmitter acetylcholine from cholinergic motor neurons, and thereby promotes locomotory behaviors (PubMed:18596236). Essential for embryonic viability and development. Has a role in dauer formation and adult life span (PubMed:10377425). Required for locomotion (PubMed:10377425). Probably by regulating neuronal transmission downstream of lin-3 and receptor lin-23 and phospholipase plc-3 and upstream of innexin unc-7 and egl-4/PKG in ALA neurons, involved in the decrease in pharyngeal pumping during the quiescent state that precedes each larval molt (PubMed:17891142).</text>
</comment>
<comment type="subunit">
    <text evidence="5 9 10 12 13 14">Interacts (via N-terminus, in open or in closed conformation) with unc-18; the interaction is direct (PubMed:10366611, PubMed:18596236, PubMed:19032153, PubMed:8939465, PubMed:9442061). Interaction in open conformation with unc-18 promotes synaptic vesicle docking and tethering (PubMed:21423527). Interaction via N-terminus with unc-18 mediates the secretion of the neurotransmitter acetylcholine from cholinergic motor neurons (PubMed:18596236). Interaction with unc-18 is reduced in the presence of unc-13 (PubMed:10366611).</text>
</comment>
<comment type="subcellular location">
    <subcellularLocation>
        <location evidence="7">Cell membrane</location>
        <topology evidence="1 2">Single-pass type IV membrane protein</topology>
    </subcellularLocation>
    <subcellularLocation>
        <location evidence="7 9">Cell projection</location>
        <location evidence="7 9">Axon</location>
    </subcellularLocation>
    <subcellularLocation>
        <location evidence="7 9">Cell projection</location>
        <location evidence="7 9">Dendrite</location>
    </subcellularLocation>
    <subcellularLocation>
        <location evidence="9">Perikaryon</location>
    </subcellularLocation>
</comment>
<comment type="alternative products">
    <event type="alternative splicing"/>
    <isoform>
        <id>O16000-1</id>
        <name evidence="22">b</name>
        <sequence type="displayed"/>
    </isoform>
    <isoform>
        <id>O16000-2</id>
        <name evidence="21">a</name>
        <name evidence="16">syn1a</name>
        <sequence type="described" ref="VSP_052630"/>
    </isoform>
</comment>
<comment type="tissue specificity">
    <text evidence="14 15">Expressed throughout the head ganglion, nerve ring, ventral cord, dorsal cord, intestine, vulva and spermatheca.</text>
</comment>
<comment type="disruption phenotype">
    <text evidence="6 11">Worms exhibit defects in locomotion and postembryonic development. All mutants are resistant to the acetylcholinesterase inhibitor aldicarb indicating impaired cholinergic transmission.</text>
</comment>
<comment type="similarity">
    <text evidence="2">Belongs to the syntaxin family.</text>
</comment>
<evidence type="ECO:0000250" key="1">
    <source>
        <dbReference type="UniProtKB" id="P32851"/>
    </source>
</evidence>
<evidence type="ECO:0000255" key="2"/>
<evidence type="ECO:0000255" key="3">
    <source>
        <dbReference type="PROSITE-ProRule" id="PRU00202"/>
    </source>
</evidence>
<evidence type="ECO:0000256" key="4">
    <source>
        <dbReference type="SAM" id="MobiDB-lite"/>
    </source>
</evidence>
<evidence type="ECO:0000269" key="5">
    <source>
    </source>
</evidence>
<evidence type="ECO:0000269" key="6">
    <source>
    </source>
</evidence>
<evidence type="ECO:0000269" key="7">
    <source>
    </source>
</evidence>
<evidence type="ECO:0000269" key="8">
    <source>
    </source>
</evidence>
<evidence type="ECO:0000269" key="9">
    <source>
    </source>
</evidence>
<evidence type="ECO:0000269" key="10">
    <source>
    </source>
</evidence>
<evidence type="ECO:0000269" key="11">
    <source>
    </source>
</evidence>
<evidence type="ECO:0000269" key="12">
    <source>
    </source>
</evidence>
<evidence type="ECO:0000269" key="13">
    <source>
    </source>
</evidence>
<evidence type="ECO:0000269" key="14">
    <source>
    </source>
</evidence>
<evidence type="ECO:0000269" key="15">
    <source>
    </source>
</evidence>
<evidence type="ECO:0000303" key="16">
    <source>
    </source>
</evidence>
<evidence type="ECO:0000305" key="17"/>
<evidence type="ECO:0000312" key="18">
    <source>
        <dbReference type="EMBL" id="AAD10538.1"/>
    </source>
</evidence>
<evidence type="ECO:0000312" key="19">
    <source>
        <dbReference type="EMBL" id="BAA23584.1"/>
    </source>
</evidence>
<evidence type="ECO:0000312" key="20">
    <source>
        <dbReference type="EMBL" id="CAB05747.1"/>
    </source>
</evidence>
<evidence type="ECO:0000312" key="21">
    <source>
        <dbReference type="WormBase" id="F56A8.7a"/>
    </source>
</evidence>
<evidence type="ECO:0000312" key="22">
    <source>
        <dbReference type="WormBase" id="F56A8.7b"/>
    </source>
</evidence>
<keyword id="KW-0025">Alternative splicing</keyword>
<keyword id="KW-1003">Cell membrane</keyword>
<keyword id="KW-0966">Cell projection</keyword>
<keyword id="KW-0175">Coiled coil</keyword>
<keyword id="KW-0193">Cuticle</keyword>
<keyword id="KW-0217">Developmental protein</keyword>
<keyword id="KW-0221">Differentiation</keyword>
<keyword id="KW-0472">Membrane</keyword>
<keyword id="KW-0524">Neurogenesis</keyword>
<keyword id="KW-0532">Neurotransmitter transport</keyword>
<keyword id="KW-1185">Reference proteome</keyword>
<keyword id="KW-0812">Transmembrane</keyword>
<keyword id="KW-1133">Transmembrane helix</keyword>
<keyword id="KW-0813">Transport</keyword>
<sequence length="291" mass="33253">MTKDRLSALKAAQSEDEQDDDMHMDTGNAQYMEEFFEQVEEIRGSVDIIANNVEEVKKKHSAILSNPVNDQKTKEELDELMAVIKRAANKVRGKLKLIENAIDHDEQGAGNADLRIRKTQHSTLSRRFVEVMTDYNKTQTDYRERCKGRIQRQLDIAGKQVGDEDLEEMIESGNPGVFTQGIITDTQQAKQTLADIEARHNDIMKLESSIRELHDMFMDMAMLVESQGEMVDRIEYNVEHAKEFVDRAVADTKKAVQYQSKARRKKICILVTGVILITGLIIFILFYAKVL</sequence>
<feature type="chain" id="PRO_0000314061" description="Syntaxin-1A homolog">
    <location>
        <begin position="1"/>
        <end position="291"/>
    </location>
</feature>
<feature type="topological domain" description="Cytoplasmic" evidence="2">
    <location>
        <begin position="1"/>
        <end position="266"/>
    </location>
</feature>
<feature type="transmembrane region" description="Helical; Anchor for type IV membrane protein" evidence="2">
    <location>
        <begin position="267"/>
        <end position="287"/>
    </location>
</feature>
<feature type="topological domain" description="Extracellular" evidence="2">
    <location>
        <begin position="288"/>
        <end position="291"/>
    </location>
</feature>
<feature type="domain" description="t-SNARE coiled-coil homology" evidence="3">
    <location>
        <begin position="193"/>
        <end position="255"/>
    </location>
</feature>
<feature type="region of interest" description="Disordered" evidence="4">
    <location>
        <begin position="1"/>
        <end position="24"/>
    </location>
</feature>
<feature type="coiled-coil region" evidence="2">
    <location>
        <begin position="69"/>
        <end position="95"/>
    </location>
</feature>
<feature type="splice variant" id="VSP_052630" description="In isoform a." evidence="17">
    <original>CILVTGVILITGLIIFILFYAKVL</original>
    <variation>IILIVVTILIGFVSLWLIQYIPGI</variation>
    <location>
        <begin position="268"/>
        <end position="291"/>
    </location>
</feature>
<feature type="mutagenesis site" description="Does not interact with unc-18." evidence="10">
    <location>
        <begin position="1"/>
        <end position="21"/>
    </location>
</feature>
<feature type="mutagenesis site" description="Does not interact with unc-18. Locomotion defects and resistant to acetylcholine esterase inhibitor Aldicarb." evidence="9 10">
    <original>L</original>
    <variation>A</variation>
    <location>
        <position position="9"/>
    </location>
</feature>
<feature type="mutagenesis site" description="Does not interact with unc-18." evidence="10">
    <original>I</original>
    <variation>A</variation>
    <location>
        <position position="234"/>
    </location>
</feature>
<feature type="mutagenesis site" description="In e246; causes constitutive dauer formation, defects in locomotion and increases life span. Restores pharyngeal pumping in animals overexpressing lin-3." evidence="6 8">
    <original>A</original>
    <variation>V</variation>
    <location>
        <position position="248"/>
    </location>
</feature>